<reference key="1">
    <citation type="journal article" date="1998" name="Science">
        <title>Genome sequence of the nematode C. elegans: a platform for investigating biology.</title>
        <authorList>
            <consortium name="The C. elegans sequencing consortium"/>
        </authorList>
    </citation>
    <scope>NUCLEOTIDE SEQUENCE [LARGE SCALE GENOMIC DNA]</scope>
    <source>
        <strain>Bristol N2</strain>
    </source>
</reference>
<gene>
    <name type="primary">tba-8</name>
    <name type="ORF">ZK899.4</name>
</gene>
<accession>P52274</accession>
<proteinExistence type="inferred from homology"/>
<comment type="function">
    <text>Tubulin is the major constituent of microtubules, a cylinder consisting of laterally associated linear protofilaments composed of alpha- and beta-tubulin heterodimers. Microtubules grow by the addition of GTP-tubulin dimers to the microtubule end, where a stabilizing cap forms. Below the cap, tubulin dimers are in GDP-bound state, owing to GTPase activity of alpha-tubulin.</text>
</comment>
<comment type="catalytic activity">
    <reaction evidence="1">
        <text>GTP + H2O = GDP + phosphate + H(+)</text>
        <dbReference type="Rhea" id="RHEA:19669"/>
        <dbReference type="ChEBI" id="CHEBI:15377"/>
        <dbReference type="ChEBI" id="CHEBI:15378"/>
        <dbReference type="ChEBI" id="CHEBI:37565"/>
        <dbReference type="ChEBI" id="CHEBI:43474"/>
        <dbReference type="ChEBI" id="CHEBI:58189"/>
    </reaction>
    <physiologicalReaction direction="left-to-right" evidence="1">
        <dbReference type="Rhea" id="RHEA:19670"/>
    </physiologicalReaction>
</comment>
<comment type="cofactor">
    <cofactor evidence="1">
        <name>Mg(2+)</name>
        <dbReference type="ChEBI" id="CHEBI:18420"/>
    </cofactor>
</comment>
<comment type="subunit">
    <text>Dimer of alpha and beta chains. A typical microtubule is a hollow water-filled tube with an outer diameter of 25 nm and an inner diameter of 15 nM. Alpha-beta heterodimers associate head-to-tail to form protofilaments running lengthwise along the microtubule wall with the beta-tubulin subunit facing the microtubule plus end conferring a structural polarity. Microtubules usually have 13 protofilaments but different protofilament numbers can be found in some organisms and specialized cells.</text>
</comment>
<comment type="subcellular location">
    <subcellularLocation>
        <location>Cytoplasm</location>
        <location>Cytoskeleton</location>
    </subcellularLocation>
</comment>
<comment type="similarity">
    <text evidence="2">Belongs to the tubulin family.</text>
</comment>
<keyword id="KW-0963">Cytoplasm</keyword>
<keyword id="KW-0206">Cytoskeleton</keyword>
<keyword id="KW-0342">GTP-binding</keyword>
<keyword id="KW-0378">Hydrolase</keyword>
<keyword id="KW-0460">Magnesium</keyword>
<keyword id="KW-0479">Metal-binding</keyword>
<keyword id="KW-0493">Microtubule</keyword>
<keyword id="KW-0547">Nucleotide-binding</keyword>
<keyword id="KW-1185">Reference proteome</keyword>
<evidence type="ECO:0000250" key="1">
    <source>
        <dbReference type="UniProtKB" id="P68363"/>
    </source>
</evidence>
<evidence type="ECO:0000305" key="2"/>
<name>TBA8_CAEEL</name>
<sequence length="452" mass="50491">MPSDGRECVSIHIGQAGAQIGNACWELYCIEHGLDEAGFLKEEEKNKKQQSLQAFFSESMNGKHVPRAIYVDLEPTVLDEIRNGVYGNLFHPDQIINGKEDAANNYARGHYTIGKELIDVVLDRIRKQTENCEGLQGFLVFHSFGGGTGSGFSSLLMERLSVEFGKKSKLEFSVYPAPQVSTSVVEPYNSILTTHTTLELSDCSFMVDNEAIYDLCRQKLHVERPSYSNLNRLIAQVVSSITASLRFDGALNVDLNEFQTNLVPYPRIHFPLATYAPVISADRAHHEPLSVQDITHMCFEKANQMVKCDPSAGKYMAVCLLYRGDVVPKDVNAAISSVKAKRGINFVDWCPTGFKVGINYQAPITVEGGDLAKVHRAVCMLSNTTAIAEAWARLDHKFDLMYSKRAFVHWFVGEGMEEGEFMEARDDLAALEKDYAEVSRDTADLEEENDEF</sequence>
<dbReference type="EC" id="3.6.5.-" evidence="1"/>
<dbReference type="EMBL" id="Z37140">
    <property type="protein sequence ID" value="CAA85497.2"/>
    <property type="molecule type" value="Genomic_DNA"/>
</dbReference>
<dbReference type="PIR" id="T28089">
    <property type="entry name" value="T28089"/>
</dbReference>
<dbReference type="RefSeq" id="NP_509591.2">
    <property type="nucleotide sequence ID" value="NM_077190.5"/>
</dbReference>
<dbReference type="SMR" id="P52274"/>
<dbReference type="BioGRID" id="55990">
    <property type="interactions" value="1"/>
</dbReference>
<dbReference type="FunCoup" id="P52274">
    <property type="interactions" value="63"/>
</dbReference>
<dbReference type="STRING" id="6239.ZK899.4.1"/>
<dbReference type="PaxDb" id="6239-ZK899.4"/>
<dbReference type="PeptideAtlas" id="P52274"/>
<dbReference type="EnsemblMetazoa" id="ZK899.4.1">
    <property type="protein sequence ID" value="ZK899.4.1"/>
    <property type="gene ID" value="WBGene00006534"/>
</dbReference>
<dbReference type="GeneID" id="191455"/>
<dbReference type="KEGG" id="cel:CELE_ZK899.4"/>
<dbReference type="UCSC" id="ZK899.4">
    <property type="organism name" value="c. elegans"/>
</dbReference>
<dbReference type="AGR" id="WB:WBGene00006534"/>
<dbReference type="CTD" id="191455"/>
<dbReference type="WormBase" id="ZK899.4">
    <property type="protein sequence ID" value="CE37468"/>
    <property type="gene ID" value="WBGene00006534"/>
    <property type="gene designation" value="tba-8"/>
</dbReference>
<dbReference type="eggNOG" id="KOG1376">
    <property type="taxonomic scope" value="Eukaryota"/>
</dbReference>
<dbReference type="HOGENOM" id="CLU_015718_0_0_1"/>
<dbReference type="InParanoid" id="P52274"/>
<dbReference type="OMA" id="FFSESMN"/>
<dbReference type="OrthoDB" id="1844at2759"/>
<dbReference type="PhylomeDB" id="P52274"/>
<dbReference type="PRO" id="PR:P52274"/>
<dbReference type="Proteomes" id="UP000001940">
    <property type="component" value="Chromosome X"/>
</dbReference>
<dbReference type="Bgee" id="WBGene00006534">
    <property type="expression patterns" value="Expressed in ventral cord neuron (C elegans) and 8 other cell types or tissues"/>
</dbReference>
<dbReference type="GO" id="GO:0005737">
    <property type="term" value="C:cytoplasm"/>
    <property type="evidence" value="ECO:0000318"/>
    <property type="project" value="GO_Central"/>
</dbReference>
<dbReference type="GO" id="GO:0005874">
    <property type="term" value="C:microtubule"/>
    <property type="evidence" value="ECO:0000318"/>
    <property type="project" value="GO_Central"/>
</dbReference>
<dbReference type="GO" id="GO:0005525">
    <property type="term" value="F:GTP binding"/>
    <property type="evidence" value="ECO:0000318"/>
    <property type="project" value="GO_Central"/>
</dbReference>
<dbReference type="GO" id="GO:0016787">
    <property type="term" value="F:hydrolase activity"/>
    <property type="evidence" value="ECO:0007669"/>
    <property type="project" value="UniProtKB-KW"/>
</dbReference>
<dbReference type="GO" id="GO:0046872">
    <property type="term" value="F:metal ion binding"/>
    <property type="evidence" value="ECO:0007669"/>
    <property type="project" value="UniProtKB-KW"/>
</dbReference>
<dbReference type="GO" id="GO:0005200">
    <property type="term" value="F:structural constituent of cytoskeleton"/>
    <property type="evidence" value="ECO:0000318"/>
    <property type="project" value="GO_Central"/>
</dbReference>
<dbReference type="GO" id="GO:0000226">
    <property type="term" value="P:microtubule cytoskeleton organization"/>
    <property type="evidence" value="ECO:0000318"/>
    <property type="project" value="GO_Central"/>
</dbReference>
<dbReference type="GO" id="GO:0000278">
    <property type="term" value="P:mitotic cell cycle"/>
    <property type="evidence" value="ECO:0000318"/>
    <property type="project" value="GO_Central"/>
</dbReference>
<dbReference type="CDD" id="cd02186">
    <property type="entry name" value="alpha_tubulin"/>
    <property type="match status" value="1"/>
</dbReference>
<dbReference type="FunFam" id="1.10.287.600:FF:000005">
    <property type="entry name" value="Tubulin alpha chain"/>
    <property type="match status" value="1"/>
</dbReference>
<dbReference type="FunFam" id="3.30.1330.20:FF:000026">
    <property type="entry name" value="Tubulin alpha chain"/>
    <property type="match status" value="1"/>
</dbReference>
<dbReference type="FunFam" id="3.40.50.1440:FF:000007">
    <property type="entry name" value="Tubulin alpha chain"/>
    <property type="match status" value="1"/>
</dbReference>
<dbReference type="Gene3D" id="1.10.287.600">
    <property type="entry name" value="Helix hairpin bin"/>
    <property type="match status" value="1"/>
</dbReference>
<dbReference type="Gene3D" id="3.30.1330.20">
    <property type="entry name" value="Tubulin/FtsZ, C-terminal domain"/>
    <property type="match status" value="1"/>
</dbReference>
<dbReference type="Gene3D" id="3.40.50.1440">
    <property type="entry name" value="Tubulin/FtsZ, GTPase domain"/>
    <property type="match status" value="1"/>
</dbReference>
<dbReference type="InterPro" id="IPR002452">
    <property type="entry name" value="Alpha_tubulin"/>
</dbReference>
<dbReference type="InterPro" id="IPR008280">
    <property type="entry name" value="Tub_FtsZ_C"/>
</dbReference>
<dbReference type="InterPro" id="IPR000217">
    <property type="entry name" value="Tubulin"/>
</dbReference>
<dbReference type="InterPro" id="IPR037103">
    <property type="entry name" value="Tubulin/FtsZ-like_C"/>
</dbReference>
<dbReference type="InterPro" id="IPR018316">
    <property type="entry name" value="Tubulin/FtsZ_2-layer-sand-dom"/>
</dbReference>
<dbReference type="InterPro" id="IPR036525">
    <property type="entry name" value="Tubulin/FtsZ_GTPase_sf"/>
</dbReference>
<dbReference type="InterPro" id="IPR023123">
    <property type="entry name" value="Tubulin_C"/>
</dbReference>
<dbReference type="InterPro" id="IPR017975">
    <property type="entry name" value="Tubulin_CS"/>
</dbReference>
<dbReference type="InterPro" id="IPR003008">
    <property type="entry name" value="Tubulin_FtsZ_GTPase"/>
</dbReference>
<dbReference type="PANTHER" id="PTHR11588">
    <property type="entry name" value="TUBULIN"/>
    <property type="match status" value="1"/>
</dbReference>
<dbReference type="Pfam" id="PF00091">
    <property type="entry name" value="Tubulin"/>
    <property type="match status" value="1"/>
</dbReference>
<dbReference type="Pfam" id="PF03953">
    <property type="entry name" value="Tubulin_C"/>
    <property type="match status" value="1"/>
</dbReference>
<dbReference type="PRINTS" id="PR01162">
    <property type="entry name" value="ALPHATUBULIN"/>
</dbReference>
<dbReference type="PRINTS" id="PR01161">
    <property type="entry name" value="TUBULIN"/>
</dbReference>
<dbReference type="SMART" id="SM00864">
    <property type="entry name" value="Tubulin"/>
    <property type="match status" value="1"/>
</dbReference>
<dbReference type="SMART" id="SM00865">
    <property type="entry name" value="Tubulin_C"/>
    <property type="match status" value="1"/>
</dbReference>
<dbReference type="SUPFAM" id="SSF55307">
    <property type="entry name" value="Tubulin C-terminal domain-like"/>
    <property type="match status" value="1"/>
</dbReference>
<dbReference type="SUPFAM" id="SSF52490">
    <property type="entry name" value="Tubulin nucleotide-binding domain-like"/>
    <property type="match status" value="1"/>
</dbReference>
<dbReference type="PROSITE" id="PS00227">
    <property type="entry name" value="TUBULIN"/>
    <property type="match status" value="1"/>
</dbReference>
<organism>
    <name type="scientific">Caenorhabditis elegans</name>
    <dbReference type="NCBI Taxonomy" id="6239"/>
    <lineage>
        <taxon>Eukaryota</taxon>
        <taxon>Metazoa</taxon>
        <taxon>Ecdysozoa</taxon>
        <taxon>Nematoda</taxon>
        <taxon>Chromadorea</taxon>
        <taxon>Rhabditida</taxon>
        <taxon>Rhabditina</taxon>
        <taxon>Rhabditomorpha</taxon>
        <taxon>Rhabditoidea</taxon>
        <taxon>Rhabditidae</taxon>
        <taxon>Peloderinae</taxon>
        <taxon>Caenorhabditis</taxon>
    </lineage>
</organism>
<protein>
    <recommendedName>
        <fullName>Tubulin alpha-8 chain</fullName>
        <ecNumber evidence="1">3.6.5.-</ecNumber>
    </recommendedName>
</protein>
<feature type="chain" id="PRO_0000048145" description="Tubulin alpha-8 chain">
    <location>
        <begin position="1"/>
        <end position="452"/>
    </location>
</feature>
<feature type="active site" evidence="1">
    <location>
        <position position="257"/>
    </location>
</feature>
<feature type="binding site" evidence="1">
    <location>
        <position position="15"/>
    </location>
    <ligand>
        <name>GTP</name>
        <dbReference type="ChEBI" id="CHEBI:37565"/>
    </ligand>
</feature>
<feature type="binding site" evidence="1">
    <location>
        <position position="74"/>
    </location>
    <ligand>
        <name>GTP</name>
        <dbReference type="ChEBI" id="CHEBI:37565"/>
    </ligand>
</feature>
<feature type="binding site" evidence="1">
    <location>
        <position position="74"/>
    </location>
    <ligand>
        <name>Mg(2+)</name>
        <dbReference type="ChEBI" id="CHEBI:18420"/>
    </ligand>
</feature>
<feature type="binding site" evidence="1">
    <location>
        <position position="143"/>
    </location>
    <ligand>
        <name>GTP</name>
        <dbReference type="ChEBI" id="CHEBI:37565"/>
    </ligand>
</feature>
<feature type="binding site" evidence="1">
    <location>
        <position position="147"/>
    </location>
    <ligand>
        <name>GTP</name>
        <dbReference type="ChEBI" id="CHEBI:37565"/>
    </ligand>
</feature>
<feature type="binding site" evidence="1">
    <location>
        <position position="148"/>
    </location>
    <ligand>
        <name>GTP</name>
        <dbReference type="ChEBI" id="CHEBI:37565"/>
    </ligand>
</feature>
<feature type="binding site" evidence="1">
    <location>
        <position position="182"/>
    </location>
    <ligand>
        <name>GTP</name>
        <dbReference type="ChEBI" id="CHEBI:37565"/>
    </ligand>
</feature>
<feature type="binding site" evidence="1">
    <location>
        <position position="209"/>
    </location>
    <ligand>
        <name>GTP</name>
        <dbReference type="ChEBI" id="CHEBI:37565"/>
    </ligand>
</feature>
<feature type="binding site" evidence="1">
    <location>
        <position position="231"/>
    </location>
    <ligand>
        <name>GTP</name>
        <dbReference type="ChEBI" id="CHEBI:37565"/>
    </ligand>
</feature>